<feature type="chain" id="PRO_0000188593" description="Glycogen synthase">
    <location>
        <begin position="1"/>
        <end position="476"/>
    </location>
</feature>
<feature type="binding site" evidence="1">
    <location>
        <position position="15"/>
    </location>
    <ligand>
        <name>ADP-alpha-D-glucose</name>
        <dbReference type="ChEBI" id="CHEBI:57498"/>
    </ligand>
</feature>
<comment type="function">
    <text evidence="1">Synthesizes alpha-1,4-glucan chains using ADP-glucose.</text>
</comment>
<comment type="catalytic activity">
    <reaction evidence="1">
        <text>[(1-&gt;4)-alpha-D-glucosyl](n) + ADP-alpha-D-glucose = [(1-&gt;4)-alpha-D-glucosyl](n+1) + ADP + H(+)</text>
        <dbReference type="Rhea" id="RHEA:18189"/>
        <dbReference type="Rhea" id="RHEA-COMP:9584"/>
        <dbReference type="Rhea" id="RHEA-COMP:9587"/>
        <dbReference type="ChEBI" id="CHEBI:15378"/>
        <dbReference type="ChEBI" id="CHEBI:15444"/>
        <dbReference type="ChEBI" id="CHEBI:57498"/>
        <dbReference type="ChEBI" id="CHEBI:456216"/>
        <dbReference type="EC" id="2.4.1.21"/>
    </reaction>
</comment>
<comment type="pathway">
    <text evidence="1">Glycan biosynthesis; glycogen biosynthesis.</text>
</comment>
<comment type="similarity">
    <text evidence="1">Belongs to the glycosyltransferase 1 family. Bacterial/plant glycogen synthase subfamily.</text>
</comment>
<comment type="sequence caution" evidence="2">
    <conflict type="erroneous initiation">
        <sequence resource="EMBL-CDS" id="AAU15655"/>
    </conflict>
</comment>
<dbReference type="EC" id="2.4.1.21" evidence="1"/>
<dbReference type="EMBL" id="CP000001">
    <property type="protein sequence ID" value="AAU15655.1"/>
    <property type="status" value="ALT_INIT"/>
    <property type="molecule type" value="Genomic_DNA"/>
</dbReference>
<dbReference type="RefSeq" id="WP_041184963.1">
    <property type="nucleotide sequence ID" value="NC_006274.1"/>
</dbReference>
<dbReference type="SMR" id="Q632H4"/>
<dbReference type="CAZy" id="GT5">
    <property type="family name" value="Glycosyltransferase Family 5"/>
</dbReference>
<dbReference type="KEGG" id="bcz:BCE33L4618"/>
<dbReference type="PATRIC" id="fig|288681.22.peg.743"/>
<dbReference type="UniPathway" id="UPA00164"/>
<dbReference type="Proteomes" id="UP000002612">
    <property type="component" value="Chromosome"/>
</dbReference>
<dbReference type="GO" id="GO:0009011">
    <property type="term" value="F:alpha-1,4-glucan glucosyltransferase (ADP-glucose donor) activity"/>
    <property type="evidence" value="ECO:0007669"/>
    <property type="project" value="UniProtKB-UniRule"/>
</dbReference>
<dbReference type="GO" id="GO:0004373">
    <property type="term" value="F:alpha-1,4-glucan glucosyltransferase (UDP-glucose donor) activity"/>
    <property type="evidence" value="ECO:0007669"/>
    <property type="project" value="InterPro"/>
</dbReference>
<dbReference type="GO" id="GO:0005978">
    <property type="term" value="P:glycogen biosynthetic process"/>
    <property type="evidence" value="ECO:0007669"/>
    <property type="project" value="UniProtKB-UniRule"/>
</dbReference>
<dbReference type="CDD" id="cd03791">
    <property type="entry name" value="GT5_Glycogen_synthase_DULL1-like"/>
    <property type="match status" value="1"/>
</dbReference>
<dbReference type="FunFam" id="3.40.50.2000:FF:000175">
    <property type="entry name" value="Glycogen synthase"/>
    <property type="match status" value="1"/>
</dbReference>
<dbReference type="Gene3D" id="3.40.50.2000">
    <property type="entry name" value="Glycogen Phosphorylase B"/>
    <property type="match status" value="2"/>
</dbReference>
<dbReference type="HAMAP" id="MF_00484">
    <property type="entry name" value="Glycogen_synth"/>
    <property type="match status" value="1"/>
</dbReference>
<dbReference type="InterPro" id="IPR001296">
    <property type="entry name" value="Glyco_trans_1"/>
</dbReference>
<dbReference type="InterPro" id="IPR011835">
    <property type="entry name" value="GS/SS"/>
</dbReference>
<dbReference type="InterPro" id="IPR013534">
    <property type="entry name" value="Starch_synth_cat_dom"/>
</dbReference>
<dbReference type="NCBIfam" id="TIGR02095">
    <property type="entry name" value="glgA"/>
    <property type="match status" value="1"/>
</dbReference>
<dbReference type="NCBIfam" id="NF001898">
    <property type="entry name" value="PRK00654.1-1"/>
    <property type="match status" value="1"/>
</dbReference>
<dbReference type="NCBIfam" id="NF001899">
    <property type="entry name" value="PRK00654.1-2"/>
    <property type="match status" value="1"/>
</dbReference>
<dbReference type="PANTHER" id="PTHR45825:SF11">
    <property type="entry name" value="ALPHA AMYLASE DOMAIN-CONTAINING PROTEIN"/>
    <property type="match status" value="1"/>
</dbReference>
<dbReference type="PANTHER" id="PTHR45825">
    <property type="entry name" value="GRANULE-BOUND STARCH SYNTHASE 1, CHLOROPLASTIC/AMYLOPLASTIC"/>
    <property type="match status" value="1"/>
</dbReference>
<dbReference type="Pfam" id="PF08323">
    <property type="entry name" value="Glyco_transf_5"/>
    <property type="match status" value="1"/>
</dbReference>
<dbReference type="Pfam" id="PF00534">
    <property type="entry name" value="Glycos_transf_1"/>
    <property type="match status" value="1"/>
</dbReference>
<dbReference type="SUPFAM" id="SSF53756">
    <property type="entry name" value="UDP-Glycosyltransferase/glycogen phosphorylase"/>
    <property type="match status" value="1"/>
</dbReference>
<evidence type="ECO:0000255" key="1">
    <source>
        <dbReference type="HAMAP-Rule" id="MF_00484"/>
    </source>
</evidence>
<evidence type="ECO:0000305" key="2"/>
<gene>
    <name evidence="1" type="primary">glgA</name>
    <name type="ordered locus">BCE33L4618</name>
</gene>
<accession>Q632H4</accession>
<protein>
    <recommendedName>
        <fullName evidence="1">Glycogen synthase</fullName>
        <ecNumber evidence="1">2.4.1.21</ecNumber>
    </recommendedName>
    <alternativeName>
        <fullName evidence="1">Starch [bacterial glycogen] synthase</fullName>
    </alternativeName>
</protein>
<reference key="1">
    <citation type="journal article" date="2006" name="J. Bacteriol.">
        <title>Pathogenomic sequence analysis of Bacillus cereus and Bacillus thuringiensis isolates closely related to Bacillus anthracis.</title>
        <authorList>
            <person name="Han C.S."/>
            <person name="Xie G."/>
            <person name="Challacombe J.F."/>
            <person name="Altherr M.R."/>
            <person name="Bhotika S.S."/>
            <person name="Bruce D."/>
            <person name="Campbell C.S."/>
            <person name="Campbell M.L."/>
            <person name="Chen J."/>
            <person name="Chertkov O."/>
            <person name="Cleland C."/>
            <person name="Dimitrijevic M."/>
            <person name="Doggett N.A."/>
            <person name="Fawcett J.J."/>
            <person name="Glavina T."/>
            <person name="Goodwin L.A."/>
            <person name="Hill K.K."/>
            <person name="Hitchcock P."/>
            <person name="Jackson P.J."/>
            <person name="Keim P."/>
            <person name="Kewalramani A.R."/>
            <person name="Longmire J."/>
            <person name="Lucas S."/>
            <person name="Malfatti S."/>
            <person name="McMurry K."/>
            <person name="Meincke L.J."/>
            <person name="Misra M."/>
            <person name="Moseman B.L."/>
            <person name="Mundt M."/>
            <person name="Munk A.C."/>
            <person name="Okinaka R.T."/>
            <person name="Parson-Quintana B."/>
            <person name="Reilly L.P."/>
            <person name="Richardson P."/>
            <person name="Robinson D.L."/>
            <person name="Rubin E."/>
            <person name="Saunders E."/>
            <person name="Tapia R."/>
            <person name="Tesmer J.G."/>
            <person name="Thayer N."/>
            <person name="Thompson L.S."/>
            <person name="Tice H."/>
            <person name="Ticknor L.O."/>
            <person name="Wills P.L."/>
            <person name="Brettin T.S."/>
            <person name="Gilna P."/>
        </authorList>
    </citation>
    <scope>NUCLEOTIDE SEQUENCE [LARGE SCALE GENOMIC DNA]</scope>
    <source>
        <strain>ZK / E33L</strain>
    </source>
</reference>
<sequence>MNILFAVSECVPFVKSGGLADVAGALPKELKKLGVEVRIILPNYSLIPQKLRDGCTLHKVINVPLGWRNQYCGILKGEQDGITYYLIDNEYYFKRDSLYGHYDDGERFSYFSKAVLECIPHLDFEVDVLHSHDWHTAMVNFLLREKYQDNPLYEHIKTVYTIHNLQFQGVFPPEVMYDLLELGDEYFHSEQLEFYGNVNFMKGGIIASDQITAVSPTYKEEIQYEFFGEKLDGLLRKYNDKLSGIVNGIDTSVYNPETDSYITAQYDAGSLYEKNENKRALQRYFGLPEKEDTPIISMVTRLTKQKGLDLVRTVFREIMEEDVQCIILGSGDSEYEQFFEWMAYEYPEKVKVYIGFNEELAHQVYAGSDLFLMPSLFEPCGLGQLIALAYGTIPIVRETGGLNDTVQSYDEETGEGNGFSFTNFNAHDMLHTVLRAIEFYHDKPVWEQLVKQAMTEDYSWEKSALAYKKLYKGLME</sequence>
<proteinExistence type="inferred from homology"/>
<keyword id="KW-0320">Glycogen biosynthesis</keyword>
<keyword id="KW-0328">Glycosyltransferase</keyword>
<keyword id="KW-0808">Transferase</keyword>
<name>GLGA_BACCZ</name>
<organism>
    <name type="scientific">Bacillus cereus (strain ZK / E33L)</name>
    <dbReference type="NCBI Taxonomy" id="288681"/>
    <lineage>
        <taxon>Bacteria</taxon>
        <taxon>Bacillati</taxon>
        <taxon>Bacillota</taxon>
        <taxon>Bacilli</taxon>
        <taxon>Bacillales</taxon>
        <taxon>Bacillaceae</taxon>
        <taxon>Bacillus</taxon>
        <taxon>Bacillus cereus group</taxon>
    </lineage>
</organism>